<name>LPXH_ECO7I</name>
<protein>
    <recommendedName>
        <fullName evidence="1">UDP-2,3-diacylglucosamine hydrolase</fullName>
        <ecNumber evidence="1">3.6.1.54</ecNumber>
    </recommendedName>
    <alternativeName>
        <fullName evidence="1">UDP-2,3-diacylglucosamine diphosphatase</fullName>
    </alternativeName>
</protein>
<keyword id="KW-0997">Cell inner membrane</keyword>
<keyword id="KW-1003">Cell membrane</keyword>
<keyword id="KW-0378">Hydrolase</keyword>
<keyword id="KW-0441">Lipid A biosynthesis</keyword>
<keyword id="KW-0444">Lipid biosynthesis</keyword>
<keyword id="KW-0443">Lipid metabolism</keyword>
<keyword id="KW-0464">Manganese</keyword>
<keyword id="KW-0472">Membrane</keyword>
<keyword id="KW-0479">Metal-binding</keyword>
<reference key="1">
    <citation type="journal article" date="2009" name="PLoS Genet.">
        <title>Organised genome dynamics in the Escherichia coli species results in highly diverse adaptive paths.</title>
        <authorList>
            <person name="Touchon M."/>
            <person name="Hoede C."/>
            <person name="Tenaillon O."/>
            <person name="Barbe V."/>
            <person name="Baeriswyl S."/>
            <person name="Bidet P."/>
            <person name="Bingen E."/>
            <person name="Bonacorsi S."/>
            <person name="Bouchier C."/>
            <person name="Bouvet O."/>
            <person name="Calteau A."/>
            <person name="Chiapello H."/>
            <person name="Clermont O."/>
            <person name="Cruveiller S."/>
            <person name="Danchin A."/>
            <person name="Diard M."/>
            <person name="Dossat C."/>
            <person name="Karoui M.E."/>
            <person name="Frapy E."/>
            <person name="Garry L."/>
            <person name="Ghigo J.M."/>
            <person name="Gilles A.M."/>
            <person name="Johnson J."/>
            <person name="Le Bouguenec C."/>
            <person name="Lescat M."/>
            <person name="Mangenot S."/>
            <person name="Martinez-Jehanne V."/>
            <person name="Matic I."/>
            <person name="Nassif X."/>
            <person name="Oztas S."/>
            <person name="Petit M.A."/>
            <person name="Pichon C."/>
            <person name="Rouy Z."/>
            <person name="Ruf C.S."/>
            <person name="Schneider D."/>
            <person name="Tourret J."/>
            <person name="Vacherie B."/>
            <person name="Vallenet D."/>
            <person name="Medigue C."/>
            <person name="Rocha E.P.C."/>
            <person name="Denamur E."/>
        </authorList>
    </citation>
    <scope>NUCLEOTIDE SEQUENCE [LARGE SCALE GENOMIC DNA]</scope>
    <source>
        <strain>IAI39 / ExPEC</strain>
    </source>
</reference>
<organism>
    <name type="scientific">Escherichia coli O7:K1 (strain IAI39 / ExPEC)</name>
    <dbReference type="NCBI Taxonomy" id="585057"/>
    <lineage>
        <taxon>Bacteria</taxon>
        <taxon>Pseudomonadati</taxon>
        <taxon>Pseudomonadota</taxon>
        <taxon>Gammaproteobacteria</taxon>
        <taxon>Enterobacterales</taxon>
        <taxon>Enterobacteriaceae</taxon>
        <taxon>Escherichia</taxon>
    </lineage>
</organism>
<accession>B7NL16</accession>
<evidence type="ECO:0000255" key="1">
    <source>
        <dbReference type="HAMAP-Rule" id="MF_00575"/>
    </source>
</evidence>
<feature type="chain" id="PRO_1000129519" description="UDP-2,3-diacylglucosamine hydrolase">
    <location>
        <begin position="1"/>
        <end position="240"/>
    </location>
</feature>
<feature type="binding site" evidence="1">
    <location>
        <position position="8"/>
    </location>
    <ligand>
        <name>Mn(2+)</name>
        <dbReference type="ChEBI" id="CHEBI:29035"/>
        <label>1</label>
    </ligand>
</feature>
<feature type="binding site" evidence="1">
    <location>
        <position position="10"/>
    </location>
    <ligand>
        <name>Mn(2+)</name>
        <dbReference type="ChEBI" id="CHEBI:29035"/>
        <label>1</label>
    </ligand>
</feature>
<feature type="binding site" evidence="1">
    <location>
        <position position="41"/>
    </location>
    <ligand>
        <name>Mn(2+)</name>
        <dbReference type="ChEBI" id="CHEBI:29035"/>
        <label>1</label>
    </ligand>
</feature>
<feature type="binding site" evidence="1">
    <location>
        <position position="41"/>
    </location>
    <ligand>
        <name>Mn(2+)</name>
        <dbReference type="ChEBI" id="CHEBI:29035"/>
        <label>2</label>
    </ligand>
</feature>
<feature type="binding site" evidence="1">
    <location>
        <begin position="79"/>
        <end position="80"/>
    </location>
    <ligand>
        <name>substrate</name>
    </ligand>
</feature>
<feature type="binding site" evidence="1">
    <location>
        <position position="79"/>
    </location>
    <ligand>
        <name>Mn(2+)</name>
        <dbReference type="ChEBI" id="CHEBI:29035"/>
        <label>2</label>
    </ligand>
</feature>
<feature type="binding site" evidence="1">
    <location>
        <position position="114"/>
    </location>
    <ligand>
        <name>Mn(2+)</name>
        <dbReference type="ChEBI" id="CHEBI:29035"/>
        <label>2</label>
    </ligand>
</feature>
<feature type="binding site" evidence="1">
    <location>
        <position position="122"/>
    </location>
    <ligand>
        <name>substrate</name>
    </ligand>
</feature>
<feature type="binding site" evidence="1">
    <location>
        <position position="160"/>
    </location>
    <ligand>
        <name>substrate</name>
    </ligand>
</feature>
<feature type="binding site" evidence="1">
    <location>
        <position position="164"/>
    </location>
    <ligand>
        <name>substrate</name>
    </ligand>
</feature>
<feature type="binding site" evidence="1">
    <location>
        <position position="167"/>
    </location>
    <ligand>
        <name>substrate</name>
    </ligand>
</feature>
<feature type="binding site" evidence="1">
    <location>
        <position position="195"/>
    </location>
    <ligand>
        <name>Mn(2+)</name>
        <dbReference type="ChEBI" id="CHEBI:29035"/>
        <label>2</label>
    </ligand>
</feature>
<feature type="binding site" evidence="1">
    <location>
        <position position="195"/>
    </location>
    <ligand>
        <name>substrate</name>
    </ligand>
</feature>
<feature type="binding site" evidence="1">
    <location>
        <position position="197"/>
    </location>
    <ligand>
        <name>Mn(2+)</name>
        <dbReference type="ChEBI" id="CHEBI:29035"/>
        <label>1</label>
    </ligand>
</feature>
<dbReference type="EC" id="3.6.1.54" evidence="1"/>
<dbReference type="EMBL" id="CU928164">
    <property type="protein sequence ID" value="CAR16625.1"/>
    <property type="molecule type" value="Genomic_DNA"/>
</dbReference>
<dbReference type="RefSeq" id="WP_000212239.1">
    <property type="nucleotide sequence ID" value="NC_011750.1"/>
</dbReference>
<dbReference type="RefSeq" id="YP_002406518.1">
    <property type="nucleotide sequence ID" value="NC_011750.1"/>
</dbReference>
<dbReference type="SMR" id="B7NL16"/>
<dbReference type="STRING" id="585057.ECIAI39_0487"/>
<dbReference type="KEGG" id="ect:ECIAI39_0487"/>
<dbReference type="PATRIC" id="fig|585057.6.peg.516"/>
<dbReference type="HOGENOM" id="CLU_074586_0_0_6"/>
<dbReference type="UniPathway" id="UPA00359">
    <property type="reaction ID" value="UER00480"/>
</dbReference>
<dbReference type="Proteomes" id="UP000000749">
    <property type="component" value="Chromosome"/>
</dbReference>
<dbReference type="GO" id="GO:0005737">
    <property type="term" value="C:cytoplasm"/>
    <property type="evidence" value="ECO:0007669"/>
    <property type="project" value="InterPro"/>
</dbReference>
<dbReference type="GO" id="GO:0019897">
    <property type="term" value="C:extrinsic component of plasma membrane"/>
    <property type="evidence" value="ECO:0007669"/>
    <property type="project" value="UniProtKB-UniRule"/>
</dbReference>
<dbReference type="GO" id="GO:0030145">
    <property type="term" value="F:manganese ion binding"/>
    <property type="evidence" value="ECO:0007669"/>
    <property type="project" value="UniProtKB-UniRule"/>
</dbReference>
<dbReference type="GO" id="GO:0008758">
    <property type="term" value="F:UDP-2,3-diacylglucosamine hydrolase activity"/>
    <property type="evidence" value="ECO:0007669"/>
    <property type="project" value="UniProtKB-UniRule"/>
</dbReference>
<dbReference type="GO" id="GO:0009245">
    <property type="term" value="P:lipid A biosynthetic process"/>
    <property type="evidence" value="ECO:0007669"/>
    <property type="project" value="UniProtKB-UniRule"/>
</dbReference>
<dbReference type="CDD" id="cd07398">
    <property type="entry name" value="MPP_YbbF-LpxH"/>
    <property type="match status" value="1"/>
</dbReference>
<dbReference type="FunFam" id="3.60.21.10:FF:000012">
    <property type="entry name" value="UDP-2,3-diacylglucosamine hydrolase"/>
    <property type="match status" value="1"/>
</dbReference>
<dbReference type="Gene3D" id="3.60.21.10">
    <property type="match status" value="1"/>
</dbReference>
<dbReference type="HAMAP" id="MF_00575">
    <property type="entry name" value="LpxH"/>
    <property type="match status" value="1"/>
</dbReference>
<dbReference type="InterPro" id="IPR004843">
    <property type="entry name" value="Calcineurin-like_PHP_ApaH"/>
</dbReference>
<dbReference type="InterPro" id="IPR043461">
    <property type="entry name" value="LpxH-like"/>
</dbReference>
<dbReference type="InterPro" id="IPR029052">
    <property type="entry name" value="Metallo-depent_PP-like"/>
</dbReference>
<dbReference type="InterPro" id="IPR010138">
    <property type="entry name" value="UDP-diacylglucosamine_Hdrlase"/>
</dbReference>
<dbReference type="NCBIfam" id="TIGR01854">
    <property type="entry name" value="lipid_A_lpxH"/>
    <property type="match status" value="1"/>
</dbReference>
<dbReference type="NCBIfam" id="NF003743">
    <property type="entry name" value="PRK05340.1"/>
    <property type="match status" value="1"/>
</dbReference>
<dbReference type="PANTHER" id="PTHR34990:SF1">
    <property type="entry name" value="UDP-2,3-DIACYLGLUCOSAMINE HYDROLASE"/>
    <property type="match status" value="1"/>
</dbReference>
<dbReference type="PANTHER" id="PTHR34990">
    <property type="entry name" value="UDP-2,3-DIACYLGLUCOSAMINE HYDROLASE-RELATED"/>
    <property type="match status" value="1"/>
</dbReference>
<dbReference type="Pfam" id="PF00149">
    <property type="entry name" value="Metallophos"/>
    <property type="match status" value="1"/>
</dbReference>
<dbReference type="SUPFAM" id="SSF56300">
    <property type="entry name" value="Metallo-dependent phosphatases"/>
    <property type="match status" value="1"/>
</dbReference>
<sequence length="240" mass="27007">MATLFIADLHLCAEEPAITAGFLRFLAREARKADALYILGDLFEAWIGDDDPNPLHRQMAAAIKAVSDSGVPCYFIHGNRDFLLGKRFARESGMTLLPEEKVLELYGRRVLIMHGDTLCTDDIGYQAFRAKVHKPWLQTLFLALPLFVRKRIAARMRANSKEANSSKSLAIMDVNQNAVVSAMEKHQVQWLIHGHTHRPAVHELIANQQPAFRVVLGAWHTEGSMVKVTADDVELIHFPF</sequence>
<gene>
    <name evidence="1" type="primary">lpxH</name>
    <name type="ordered locus">ECIAI39_0487</name>
</gene>
<proteinExistence type="inferred from homology"/>
<comment type="function">
    <text evidence="1">Hydrolyzes the pyrophosphate bond of UDP-2,3-diacylglucosamine to yield 2,3-diacylglucosamine 1-phosphate (lipid X) and UMP by catalyzing the attack of water at the alpha-P atom. Involved in the biosynthesis of lipid A, a phosphorylated glycolipid that anchors the lipopolysaccharide to the outer membrane of the cell.</text>
</comment>
<comment type="catalytic activity">
    <reaction evidence="1">
        <text>UDP-2-N,3-O-bis[(3R)-3-hydroxytetradecanoyl]-alpha-D-glucosamine + H2O = 2-N,3-O-bis[(3R)-3-hydroxytetradecanoyl]-alpha-D-glucosaminyl 1-phosphate + UMP + 2 H(+)</text>
        <dbReference type="Rhea" id="RHEA:25213"/>
        <dbReference type="ChEBI" id="CHEBI:15377"/>
        <dbReference type="ChEBI" id="CHEBI:15378"/>
        <dbReference type="ChEBI" id="CHEBI:57865"/>
        <dbReference type="ChEBI" id="CHEBI:57957"/>
        <dbReference type="ChEBI" id="CHEBI:78847"/>
        <dbReference type="EC" id="3.6.1.54"/>
    </reaction>
</comment>
<comment type="cofactor">
    <cofactor evidence="1">
        <name>Mn(2+)</name>
        <dbReference type="ChEBI" id="CHEBI:29035"/>
    </cofactor>
    <text evidence="1">Binds 2 Mn(2+) ions per subunit in a binuclear metal center.</text>
</comment>
<comment type="pathway">
    <text evidence="1">Glycolipid biosynthesis; lipid IV(A) biosynthesis; lipid IV(A) from (3R)-3-hydroxytetradecanoyl-[acyl-carrier-protein] and UDP-N-acetyl-alpha-D-glucosamine: step 4/6.</text>
</comment>
<comment type="subcellular location">
    <subcellularLocation>
        <location evidence="1">Cell inner membrane</location>
        <topology evidence="1">Peripheral membrane protein</topology>
        <orientation evidence="1">Cytoplasmic side</orientation>
    </subcellularLocation>
</comment>
<comment type="similarity">
    <text evidence="1">Belongs to the LpxH family.</text>
</comment>